<accession>Q03277</accession>
<reference key="1">
    <citation type="journal article" date="1993" name="Mol. Biol. Evol.">
        <title>Sequence relationship of retrotransposable elements R1 and R2 within and between divergent insect species.</title>
        <authorList>
            <person name="Burke W.D."/>
            <person name="Eickbush D.G."/>
            <person name="Xiong Y."/>
            <person name="Jakubczak J.L."/>
            <person name="Eickbush T.H."/>
        </authorList>
    </citation>
    <scope>NUCLEOTIDE SEQUENCE [GENOMIC DNA]</scope>
</reference>
<proteinExistence type="predicted"/>
<name>PO11_BRACO</name>
<protein>
    <recommendedName>
        <fullName>Retrovirus-related Pol polyprotein from type-1 retrotransposable element R1</fullName>
    </recommendedName>
    <alternativeName>
        <fullName>Retrovirus-related Pol polyprotein from type I retrotransposable element R1</fullName>
    </alternativeName>
    <domain>
        <recommendedName>
            <fullName>Reverse transcriptase</fullName>
            <ecNumber>2.7.7.49</ecNumber>
        </recommendedName>
    </domain>
    <domain>
        <recommendedName>
            <fullName>Endonuclease</fullName>
        </recommendedName>
    </domain>
</protein>
<keyword id="KW-0255">Endonuclease</keyword>
<keyword id="KW-0378">Hydrolase</keyword>
<keyword id="KW-0540">Nuclease</keyword>
<keyword id="KW-0548">Nucleotidyltransferase</keyword>
<keyword id="KW-0695">RNA-directed DNA polymerase</keyword>
<keyword id="KW-0808">Transferase</keyword>
<keyword id="KW-0814">Transposable element</keyword>
<dbReference type="EC" id="2.7.7.49"/>
<dbReference type="EMBL" id="L00945">
    <property type="protein sequence ID" value="AAA29813.1"/>
    <property type="molecule type" value="Genomic_DNA"/>
</dbReference>
<dbReference type="PIR" id="A44490">
    <property type="entry name" value="A44490"/>
</dbReference>
<dbReference type="SMR" id="Q03277"/>
<dbReference type="OrthoDB" id="6516289at2759"/>
<dbReference type="GO" id="GO:0004519">
    <property type="term" value="F:endonuclease activity"/>
    <property type="evidence" value="ECO:0007669"/>
    <property type="project" value="UniProtKB-KW"/>
</dbReference>
<dbReference type="GO" id="GO:0003964">
    <property type="term" value="F:RNA-directed DNA polymerase activity"/>
    <property type="evidence" value="ECO:0007669"/>
    <property type="project" value="UniProtKB-KW"/>
</dbReference>
<dbReference type="CDD" id="cd01650">
    <property type="entry name" value="RT_nLTR_like"/>
    <property type="match status" value="1"/>
</dbReference>
<dbReference type="Gene3D" id="3.60.10.10">
    <property type="entry name" value="Endonuclease/exonuclease/phosphatase"/>
    <property type="match status" value="1"/>
</dbReference>
<dbReference type="InterPro" id="IPR043502">
    <property type="entry name" value="DNA/RNA_pol_sf"/>
</dbReference>
<dbReference type="InterPro" id="IPR036691">
    <property type="entry name" value="Endo/exonu/phosph_ase_sf"/>
</dbReference>
<dbReference type="InterPro" id="IPR005135">
    <property type="entry name" value="Endo/exonuclease/phosphatase"/>
</dbReference>
<dbReference type="InterPro" id="IPR000477">
    <property type="entry name" value="RT_dom"/>
</dbReference>
<dbReference type="PANTHER" id="PTHR19446">
    <property type="entry name" value="REVERSE TRANSCRIPTASES"/>
    <property type="match status" value="1"/>
</dbReference>
<dbReference type="Pfam" id="PF14529">
    <property type="entry name" value="Exo_endo_phos_2"/>
    <property type="match status" value="1"/>
</dbReference>
<dbReference type="Pfam" id="PF00078">
    <property type="entry name" value="RVT_1"/>
    <property type="match status" value="1"/>
</dbReference>
<dbReference type="SUPFAM" id="SSF56672">
    <property type="entry name" value="DNA/RNA polymerases"/>
    <property type="match status" value="1"/>
</dbReference>
<dbReference type="SUPFAM" id="SSF56219">
    <property type="entry name" value="DNase I-like"/>
    <property type="match status" value="1"/>
</dbReference>
<dbReference type="PROSITE" id="PS50878">
    <property type="entry name" value="RT_POL"/>
    <property type="match status" value="1"/>
</dbReference>
<evidence type="ECO:0000255" key="1">
    <source>
        <dbReference type="PROSITE-ProRule" id="PRU00405"/>
    </source>
</evidence>
<comment type="catalytic activity">
    <reaction evidence="1">
        <text>DNA(n) + a 2'-deoxyribonucleoside 5'-triphosphate = DNA(n+1) + diphosphate</text>
        <dbReference type="Rhea" id="RHEA:22508"/>
        <dbReference type="Rhea" id="RHEA-COMP:17339"/>
        <dbReference type="Rhea" id="RHEA-COMP:17340"/>
        <dbReference type="ChEBI" id="CHEBI:33019"/>
        <dbReference type="ChEBI" id="CHEBI:61560"/>
        <dbReference type="ChEBI" id="CHEBI:173112"/>
        <dbReference type="EC" id="2.7.7.49"/>
    </reaction>
</comment>
<organism>
    <name type="scientific">Bradysia coprophila</name>
    <name type="common">Dark-winged fungus gnat</name>
    <name type="synonym">Sciara coprophila</name>
    <dbReference type="NCBI Taxonomy" id="38358"/>
    <lineage>
        <taxon>Eukaryota</taxon>
        <taxon>Metazoa</taxon>
        <taxon>Ecdysozoa</taxon>
        <taxon>Arthropoda</taxon>
        <taxon>Hexapoda</taxon>
        <taxon>Insecta</taxon>
        <taxon>Pterygota</taxon>
        <taxon>Neoptera</taxon>
        <taxon>Endopterygota</taxon>
        <taxon>Diptera</taxon>
        <taxon>Nematocera</taxon>
        <taxon>Sciaroidea</taxon>
        <taxon>Sciaridae</taxon>
        <taxon>Bradysia</taxon>
    </lineage>
</organism>
<feature type="chain" id="PRO_0000058493" description="Retrovirus-related Pol polyprotein from type-1 retrotransposable element R1">
    <location>
        <begin position="1" status="less than"/>
        <end position="1004"/>
    </location>
</feature>
<feature type="domain" description="Reverse transcriptase" evidence="1">
    <location>
        <begin position="450"/>
        <end position="717"/>
    </location>
</feature>
<feature type="region of interest" description="Nucleic acid-binding endonuclease">
    <location>
        <begin position="853"/>
        <end position="1004"/>
    </location>
</feature>
<feature type="non-terminal residue">
    <location>
        <position position="1"/>
    </location>
</feature>
<sequence>LRGEVRGLPSSFRVVTSRIVNDGIGISAIVINDPEADVLVIEDCTDEYGVCVLIKGATCSMYVVSVYCRFGTALGPYLQYMENVRVKCGNTYMIMGMDANAVSPLWFSKGENLGRGRLNEANGLLLEEWILEGRMIVINEPSEWYTFSGPNGSSDIDVTLVNEAGGRFGYEWSVQPEWGVSDHNLIRIRVSLDGLVADASPSPQSARWQTRDTDWGEYMGDVKAKADVFGLAQYENVSVDEKVDLLTEWIYGANDWNMRRHTAVRTFQNEWWSVELAEKRSELRRRRHAFQRIRNAGAASLADRLQAFRDCKIEYKRMLCEAKLRCWQEFVASESNENPWGRVFKLCRGRRKPVDVCSVKVDGVYTDTWEGSVNAMMNVFFPASIDDASEIDRLKAIARPLPPDLEMDEVSDSVRRCKVRKSPGPDGIVGEMVRAVWGAIPEYMFCLYKQCLLESYFPQKWKIASLVILLKLLDRIRSDPGSYRPICLLDNLGKVLEGIMVKRLDQKLMDVEVSPYQFAFTYGKSTEDAWRCVQRHVECSEMKYVIGLNIDFQGAFDNLGWLSMLLKLDEAQSNEFGLWMSYFGGRKVYYVGKTGIVRKDVTRGCPQGSKSGPAMWKLVMNELLLALVAAGFFIVAFADDGTIVIGANSRSALEELGTRCLQLCHEWGKRVCVPVSAGKTTCILMKGHLSANRPPCIRLNGTSISYKSEVKHLGIFVAERMNFRPHFVYLRGKILGLVGCLRRVMRKSWGLGRRATCILYKGLFVACMSYGASVWFRTLRFSYASILLNRCQRLVLYASLNVCRTVSTERMQVLHGELPWDLEATRRGLLSEFRKGITPVDGDPITDEEMLGLSGSQFKELLMERLLDVWQGRWDVSEKGRLTHEFIPSVRFVRENEWMAFGLCLGYVLTGHGSMNGFLHKRGLSNTPVCMCGAPNEDVKHLLGECPLYEDLRDLNGCGLLIRNGSLDVSGALSEIGAFEKLNQFAVSLFGRRSRLMRGMRIRE</sequence>